<evidence type="ECO:0000255" key="1">
    <source>
        <dbReference type="HAMAP-Rule" id="MF_00057"/>
    </source>
</evidence>
<sequence>MSFTVIIPARFASSRLPGKPLADIAGKPMIQHVFEKALQSGASRVIIATDNENVADVAKNFGAEVCMTSVNHNSGTERLAEVVEKLAIPDNEIIVNIQGDEPLIPPVIVRQVADNLAKFNVNMASLAVKIHDAEELFNPNAVKVLTDKDGYVLYFSRSVIPYDRDQFMNLQNVQKVQLADAYLRHIGIYAYRAGFIKQYVQWAPTQLENLEKLEQLRVLYNGERIHVELAKEVPAVGVDTAEDLEKVRLILAKD</sequence>
<keyword id="KW-0963">Cytoplasm</keyword>
<keyword id="KW-0448">Lipopolysaccharide biosynthesis</keyword>
<keyword id="KW-0548">Nucleotidyltransferase</keyword>
<keyword id="KW-0808">Transferase</keyword>
<proteinExistence type="inferred from homology"/>
<comment type="function">
    <text evidence="1">Activates KDO (a required 8-carbon sugar) for incorporation into bacterial lipopolysaccharide in Gram-negative bacteria.</text>
</comment>
<comment type="catalytic activity">
    <reaction evidence="1">
        <text>3-deoxy-alpha-D-manno-oct-2-ulosonate + CTP = CMP-3-deoxy-beta-D-manno-octulosonate + diphosphate</text>
        <dbReference type="Rhea" id="RHEA:23448"/>
        <dbReference type="ChEBI" id="CHEBI:33019"/>
        <dbReference type="ChEBI" id="CHEBI:37563"/>
        <dbReference type="ChEBI" id="CHEBI:85986"/>
        <dbReference type="ChEBI" id="CHEBI:85987"/>
        <dbReference type="EC" id="2.7.7.38"/>
    </reaction>
</comment>
<comment type="pathway">
    <text evidence="1">Nucleotide-sugar biosynthesis; CMP-3-deoxy-D-manno-octulosonate biosynthesis; CMP-3-deoxy-D-manno-octulosonate from 3-deoxy-D-manno-octulosonate and CTP: step 1/1.</text>
</comment>
<comment type="pathway">
    <text evidence="1">Bacterial outer membrane biogenesis; lipopolysaccharide biosynthesis.</text>
</comment>
<comment type="subcellular location">
    <subcellularLocation>
        <location evidence="1">Cytoplasm</location>
    </subcellularLocation>
</comment>
<comment type="similarity">
    <text evidence="1">Belongs to the KdsB family.</text>
</comment>
<feature type="chain" id="PRO_1000003361" description="3-deoxy-manno-octulosonate cytidylyltransferase">
    <location>
        <begin position="1"/>
        <end position="254"/>
    </location>
</feature>
<protein>
    <recommendedName>
        <fullName evidence="1">3-deoxy-manno-octulosonate cytidylyltransferase</fullName>
        <ecNumber evidence="1">2.7.7.38</ecNumber>
    </recommendedName>
    <alternativeName>
        <fullName evidence="1">CMP-2-keto-3-deoxyoctulosonic acid synthase</fullName>
        <shortName evidence="1">CKS</shortName>
        <shortName evidence="1">CMP-KDO synthase</shortName>
    </alternativeName>
</protein>
<name>KDSB_HAEIE</name>
<gene>
    <name evidence="1" type="primary">kdsB</name>
    <name type="ordered locus">CGSHiEE_03010</name>
</gene>
<reference key="1">
    <citation type="journal article" date="2007" name="Genome Biol.">
        <title>Characterization and modeling of the Haemophilus influenzae core and supragenomes based on the complete genomic sequences of Rd and 12 clinical nontypeable strains.</title>
        <authorList>
            <person name="Hogg J.S."/>
            <person name="Hu F.Z."/>
            <person name="Janto B."/>
            <person name="Boissy R."/>
            <person name="Hayes J."/>
            <person name="Keefe R."/>
            <person name="Post J.C."/>
            <person name="Ehrlich G.D."/>
        </authorList>
    </citation>
    <scope>NUCLEOTIDE SEQUENCE [LARGE SCALE GENOMIC DNA]</scope>
    <source>
        <strain>PittEE</strain>
    </source>
</reference>
<accession>A5UB81</accession>
<dbReference type="EC" id="2.7.7.38" evidence="1"/>
<dbReference type="EMBL" id="CP000671">
    <property type="protein sequence ID" value="ABQ98032.1"/>
    <property type="molecule type" value="Genomic_DNA"/>
</dbReference>
<dbReference type="SMR" id="A5UB81"/>
<dbReference type="KEGG" id="hip:CGSHiEE_03010"/>
<dbReference type="HOGENOM" id="CLU_065038_1_0_6"/>
<dbReference type="UniPathway" id="UPA00030"/>
<dbReference type="UniPathway" id="UPA00358">
    <property type="reaction ID" value="UER00476"/>
</dbReference>
<dbReference type="GO" id="GO:0005829">
    <property type="term" value="C:cytosol"/>
    <property type="evidence" value="ECO:0007669"/>
    <property type="project" value="TreeGrafter"/>
</dbReference>
<dbReference type="GO" id="GO:0008690">
    <property type="term" value="F:3-deoxy-manno-octulosonate cytidylyltransferase activity"/>
    <property type="evidence" value="ECO:0007669"/>
    <property type="project" value="UniProtKB-UniRule"/>
</dbReference>
<dbReference type="GO" id="GO:0033468">
    <property type="term" value="P:CMP-keto-3-deoxy-D-manno-octulosonic acid biosynthetic process"/>
    <property type="evidence" value="ECO:0007669"/>
    <property type="project" value="UniProtKB-UniRule"/>
</dbReference>
<dbReference type="GO" id="GO:0009103">
    <property type="term" value="P:lipopolysaccharide biosynthetic process"/>
    <property type="evidence" value="ECO:0007669"/>
    <property type="project" value="UniProtKB-UniRule"/>
</dbReference>
<dbReference type="CDD" id="cd02517">
    <property type="entry name" value="CMP-KDO-Synthetase"/>
    <property type="match status" value="1"/>
</dbReference>
<dbReference type="FunFam" id="3.90.550.10:FF:000011">
    <property type="entry name" value="3-deoxy-manno-octulosonate cytidylyltransferase"/>
    <property type="match status" value="1"/>
</dbReference>
<dbReference type="Gene3D" id="3.90.550.10">
    <property type="entry name" value="Spore Coat Polysaccharide Biosynthesis Protein SpsA, Chain A"/>
    <property type="match status" value="1"/>
</dbReference>
<dbReference type="HAMAP" id="MF_00057">
    <property type="entry name" value="KdsB"/>
    <property type="match status" value="1"/>
</dbReference>
<dbReference type="InterPro" id="IPR003329">
    <property type="entry name" value="Cytidylyl_trans"/>
</dbReference>
<dbReference type="InterPro" id="IPR004528">
    <property type="entry name" value="KdsB"/>
</dbReference>
<dbReference type="InterPro" id="IPR029044">
    <property type="entry name" value="Nucleotide-diphossugar_trans"/>
</dbReference>
<dbReference type="NCBIfam" id="TIGR00466">
    <property type="entry name" value="kdsB"/>
    <property type="match status" value="1"/>
</dbReference>
<dbReference type="NCBIfam" id="NF003950">
    <property type="entry name" value="PRK05450.1-3"/>
    <property type="match status" value="1"/>
</dbReference>
<dbReference type="NCBIfam" id="NF003952">
    <property type="entry name" value="PRK05450.1-5"/>
    <property type="match status" value="1"/>
</dbReference>
<dbReference type="NCBIfam" id="NF009905">
    <property type="entry name" value="PRK13368.1"/>
    <property type="match status" value="1"/>
</dbReference>
<dbReference type="PANTHER" id="PTHR42866">
    <property type="entry name" value="3-DEOXY-MANNO-OCTULOSONATE CYTIDYLYLTRANSFERASE"/>
    <property type="match status" value="1"/>
</dbReference>
<dbReference type="PANTHER" id="PTHR42866:SF2">
    <property type="entry name" value="3-DEOXY-MANNO-OCTULOSONATE CYTIDYLYLTRANSFERASE, MITOCHONDRIAL"/>
    <property type="match status" value="1"/>
</dbReference>
<dbReference type="Pfam" id="PF02348">
    <property type="entry name" value="CTP_transf_3"/>
    <property type="match status" value="1"/>
</dbReference>
<dbReference type="SUPFAM" id="SSF53448">
    <property type="entry name" value="Nucleotide-diphospho-sugar transferases"/>
    <property type="match status" value="1"/>
</dbReference>
<organism>
    <name type="scientific">Haemophilus influenzae (strain PittEE)</name>
    <dbReference type="NCBI Taxonomy" id="374930"/>
    <lineage>
        <taxon>Bacteria</taxon>
        <taxon>Pseudomonadati</taxon>
        <taxon>Pseudomonadota</taxon>
        <taxon>Gammaproteobacteria</taxon>
        <taxon>Pasteurellales</taxon>
        <taxon>Pasteurellaceae</taxon>
        <taxon>Haemophilus</taxon>
    </lineage>
</organism>